<gene>
    <name type="ordered locus">MJ0310</name>
</gene>
<organism>
    <name type="scientific">Methanocaldococcus jannaschii (strain ATCC 43067 / DSM 2661 / JAL-1 / JCM 10045 / NBRC 100440)</name>
    <name type="common">Methanococcus jannaschii</name>
    <dbReference type="NCBI Taxonomy" id="243232"/>
    <lineage>
        <taxon>Archaea</taxon>
        <taxon>Methanobacteriati</taxon>
        <taxon>Methanobacteriota</taxon>
        <taxon>Methanomada group</taxon>
        <taxon>Methanococci</taxon>
        <taxon>Methanococcales</taxon>
        <taxon>Methanocaldococcaceae</taxon>
        <taxon>Methanocaldococcus</taxon>
    </lineage>
</organism>
<dbReference type="EMBL" id="L77117">
    <property type="protein sequence ID" value="AAB98296.1"/>
    <property type="molecule type" value="Genomic_DNA"/>
</dbReference>
<dbReference type="PIR" id="G64338">
    <property type="entry name" value="G64338"/>
</dbReference>
<dbReference type="RefSeq" id="WP_010869808.1">
    <property type="nucleotide sequence ID" value="NC_000909.1"/>
</dbReference>
<dbReference type="SMR" id="Q57758"/>
<dbReference type="STRING" id="243232.MJ_0310"/>
<dbReference type="PaxDb" id="243232-MJ_0310"/>
<dbReference type="EnsemblBacteria" id="AAB98296">
    <property type="protein sequence ID" value="AAB98296"/>
    <property type="gene ID" value="MJ_0310"/>
</dbReference>
<dbReference type="GeneID" id="1451165"/>
<dbReference type="KEGG" id="mja:MJ_0310"/>
<dbReference type="eggNOG" id="arCOG02603">
    <property type="taxonomic scope" value="Archaea"/>
</dbReference>
<dbReference type="HOGENOM" id="CLU_118613_4_0_2"/>
<dbReference type="InParanoid" id="Q57758"/>
<dbReference type="OrthoDB" id="92542at2157"/>
<dbReference type="PhylomeDB" id="Q57758"/>
<dbReference type="Proteomes" id="UP000000805">
    <property type="component" value="Chromosome"/>
</dbReference>
<dbReference type="GO" id="GO:0005085">
    <property type="term" value="F:guanyl-nucleotide exchange factor activity"/>
    <property type="evidence" value="ECO:0007669"/>
    <property type="project" value="InterPro"/>
</dbReference>
<dbReference type="GO" id="GO:0060090">
    <property type="term" value="F:molecular adaptor activity"/>
    <property type="evidence" value="ECO:0007669"/>
    <property type="project" value="InterPro"/>
</dbReference>
<dbReference type="GO" id="GO:0071230">
    <property type="term" value="P:cellular response to amino acid stimulus"/>
    <property type="evidence" value="ECO:0000318"/>
    <property type="project" value="GO_Central"/>
</dbReference>
<dbReference type="GO" id="GO:0032008">
    <property type="term" value="P:positive regulation of TOR signaling"/>
    <property type="evidence" value="ECO:0000318"/>
    <property type="project" value="GO_Central"/>
</dbReference>
<dbReference type="FunFam" id="3.30.450.30:FF:000052">
    <property type="entry name" value="Uncharacterized protein MJ1340"/>
    <property type="match status" value="1"/>
</dbReference>
<dbReference type="Gene3D" id="3.30.450.30">
    <property type="entry name" value="Dynein light chain 2a, cytoplasmic"/>
    <property type="match status" value="1"/>
</dbReference>
<dbReference type="InterPro" id="IPR037587">
    <property type="entry name" value="LAMTOR2-like"/>
</dbReference>
<dbReference type="InterPro" id="IPR004942">
    <property type="entry name" value="Roadblock/LAMTOR2_dom"/>
</dbReference>
<dbReference type="PANTHER" id="PTHR13323">
    <property type="entry name" value="LATE ENDOSOMAL/LYSOSOMAL MP1 INTERACTING PROTEIN"/>
    <property type="match status" value="1"/>
</dbReference>
<dbReference type="Pfam" id="PF03259">
    <property type="entry name" value="Robl_LC7"/>
    <property type="match status" value="1"/>
</dbReference>
<dbReference type="SMART" id="SM00960">
    <property type="entry name" value="Robl_LC7"/>
    <property type="match status" value="1"/>
</dbReference>
<dbReference type="SUPFAM" id="SSF103196">
    <property type="entry name" value="Roadblock/LC7 domain"/>
    <property type="match status" value="1"/>
</dbReference>
<proteinExistence type="predicted"/>
<reference key="1">
    <citation type="journal article" date="1996" name="Science">
        <title>Complete genome sequence of the methanogenic archaeon, Methanococcus jannaschii.</title>
        <authorList>
            <person name="Bult C.J."/>
            <person name="White O."/>
            <person name="Olsen G.J."/>
            <person name="Zhou L."/>
            <person name="Fleischmann R.D."/>
            <person name="Sutton G.G."/>
            <person name="Blake J.A."/>
            <person name="FitzGerald L.M."/>
            <person name="Clayton R.A."/>
            <person name="Gocayne J.D."/>
            <person name="Kerlavage A.R."/>
            <person name="Dougherty B.A."/>
            <person name="Tomb J.-F."/>
            <person name="Adams M.D."/>
            <person name="Reich C.I."/>
            <person name="Overbeek R."/>
            <person name="Kirkness E.F."/>
            <person name="Weinstock K.G."/>
            <person name="Merrick J.M."/>
            <person name="Glodek A."/>
            <person name="Scott J.L."/>
            <person name="Geoghagen N.S.M."/>
            <person name="Weidman J.F."/>
            <person name="Fuhrmann J.L."/>
            <person name="Nguyen D."/>
            <person name="Utterback T.R."/>
            <person name="Kelley J.M."/>
            <person name="Peterson J.D."/>
            <person name="Sadow P.W."/>
            <person name="Hanna M.C."/>
            <person name="Cotton M.D."/>
            <person name="Roberts K.M."/>
            <person name="Hurst M.A."/>
            <person name="Kaine B.P."/>
            <person name="Borodovsky M."/>
            <person name="Klenk H.-P."/>
            <person name="Fraser C.M."/>
            <person name="Smith H.O."/>
            <person name="Woese C.R."/>
            <person name="Venter J.C."/>
        </authorList>
    </citation>
    <scope>NUCLEOTIDE SEQUENCE [LARGE SCALE GENOMIC DNA]</scope>
    <source>
        <strain>ATCC 43067 / DSM 2661 / JAL-1 / JCM 10045 / NBRC 100440</strain>
    </source>
</reference>
<accession>Q57758</accession>
<sequence>MIDRVLLELNKTEGIKGSMVVGKDGLVIASQLPGSVDAELVGAMASAAFGAAERTAAEIGMGTLEQTMIEGEHGKTLMVDAGEGILVVLTDAKVNLGLIRITMKRAADKIKAMF</sequence>
<keyword id="KW-1185">Reference proteome</keyword>
<protein>
    <recommendedName>
        <fullName>Uncharacterized protein MJ0310</fullName>
    </recommendedName>
</protein>
<name>Y310_METJA</name>
<feature type="chain" id="PRO_0000106786" description="Uncharacterized protein MJ0310">
    <location>
        <begin position="1"/>
        <end position="114"/>
    </location>
</feature>